<reference key="1">
    <citation type="submission" date="2005-10" db="EMBL/GenBank/DDBJ databases">
        <title>Complete sequence of chromosome 1 of Burkholderia sp. 383.</title>
        <authorList>
            <consortium name="US DOE Joint Genome Institute"/>
            <person name="Copeland A."/>
            <person name="Lucas S."/>
            <person name="Lapidus A."/>
            <person name="Barry K."/>
            <person name="Detter J.C."/>
            <person name="Glavina T."/>
            <person name="Hammon N."/>
            <person name="Israni S."/>
            <person name="Pitluck S."/>
            <person name="Chain P."/>
            <person name="Malfatti S."/>
            <person name="Shin M."/>
            <person name="Vergez L."/>
            <person name="Schmutz J."/>
            <person name="Larimer F."/>
            <person name="Land M."/>
            <person name="Kyrpides N."/>
            <person name="Lykidis A."/>
            <person name="Richardson P."/>
        </authorList>
    </citation>
    <scope>NUCLEOTIDE SEQUENCE [LARGE SCALE GENOMIC DNA]</scope>
    <source>
        <strain>ATCC 17760 / DSM 23089 / LMG 22485 / NCIMB 9086 / R18194 / 383</strain>
    </source>
</reference>
<dbReference type="EMBL" id="CP000151">
    <property type="protein sequence ID" value="ABB08766.1"/>
    <property type="molecule type" value="Genomic_DNA"/>
</dbReference>
<dbReference type="RefSeq" id="WP_006486248.1">
    <property type="nucleotide sequence ID" value="NZ_WNDV01000021.1"/>
</dbReference>
<dbReference type="SMR" id="Q39FK0"/>
<dbReference type="GeneID" id="98105608"/>
<dbReference type="KEGG" id="bur:Bcep18194_A5172"/>
<dbReference type="HOGENOM" id="CLU_148710_0_3_4"/>
<dbReference type="Proteomes" id="UP000002705">
    <property type="component" value="Chromosome 1"/>
</dbReference>
<dbReference type="GO" id="GO:0022627">
    <property type="term" value="C:cytosolic small ribosomal subunit"/>
    <property type="evidence" value="ECO:0007669"/>
    <property type="project" value="TreeGrafter"/>
</dbReference>
<dbReference type="GO" id="GO:0070181">
    <property type="term" value="F:small ribosomal subunit rRNA binding"/>
    <property type="evidence" value="ECO:0007669"/>
    <property type="project" value="TreeGrafter"/>
</dbReference>
<dbReference type="GO" id="GO:0003735">
    <property type="term" value="F:structural constituent of ribosome"/>
    <property type="evidence" value="ECO:0007669"/>
    <property type="project" value="InterPro"/>
</dbReference>
<dbReference type="GO" id="GO:0006412">
    <property type="term" value="P:translation"/>
    <property type="evidence" value="ECO:0007669"/>
    <property type="project" value="UniProtKB-UniRule"/>
</dbReference>
<dbReference type="Gene3D" id="4.10.640.10">
    <property type="entry name" value="Ribosomal protein S18"/>
    <property type="match status" value="1"/>
</dbReference>
<dbReference type="HAMAP" id="MF_00270">
    <property type="entry name" value="Ribosomal_bS18"/>
    <property type="match status" value="1"/>
</dbReference>
<dbReference type="InterPro" id="IPR001648">
    <property type="entry name" value="Ribosomal_bS18"/>
</dbReference>
<dbReference type="InterPro" id="IPR018275">
    <property type="entry name" value="Ribosomal_bS18_CS"/>
</dbReference>
<dbReference type="InterPro" id="IPR036870">
    <property type="entry name" value="Ribosomal_bS18_sf"/>
</dbReference>
<dbReference type="NCBIfam" id="TIGR00165">
    <property type="entry name" value="S18"/>
    <property type="match status" value="1"/>
</dbReference>
<dbReference type="PANTHER" id="PTHR13479">
    <property type="entry name" value="30S RIBOSOMAL PROTEIN S18"/>
    <property type="match status" value="1"/>
</dbReference>
<dbReference type="PANTHER" id="PTHR13479:SF40">
    <property type="entry name" value="SMALL RIBOSOMAL SUBUNIT PROTEIN BS18M"/>
    <property type="match status" value="1"/>
</dbReference>
<dbReference type="Pfam" id="PF01084">
    <property type="entry name" value="Ribosomal_S18"/>
    <property type="match status" value="1"/>
</dbReference>
<dbReference type="PRINTS" id="PR00974">
    <property type="entry name" value="RIBOSOMALS18"/>
</dbReference>
<dbReference type="SUPFAM" id="SSF46911">
    <property type="entry name" value="Ribosomal protein S18"/>
    <property type="match status" value="1"/>
</dbReference>
<dbReference type="PROSITE" id="PS00057">
    <property type="entry name" value="RIBOSOMAL_S18"/>
    <property type="match status" value="1"/>
</dbReference>
<protein>
    <recommendedName>
        <fullName evidence="1">Small ribosomal subunit protein bS18</fullName>
    </recommendedName>
    <alternativeName>
        <fullName evidence="2">30S ribosomal protein S18</fullName>
    </alternativeName>
</protein>
<accession>Q39FK0</accession>
<proteinExistence type="inferred from homology"/>
<keyword id="KW-0687">Ribonucleoprotein</keyword>
<keyword id="KW-0689">Ribosomal protein</keyword>
<keyword id="KW-0694">RNA-binding</keyword>
<keyword id="KW-0699">rRNA-binding</keyword>
<gene>
    <name evidence="1" type="primary">rpsR</name>
    <name type="ordered locus">Bcep18194_A5172</name>
</gene>
<evidence type="ECO:0000255" key="1">
    <source>
        <dbReference type="HAMAP-Rule" id="MF_00270"/>
    </source>
</evidence>
<evidence type="ECO:0000305" key="2"/>
<sequence length="91" mass="10639">MPRPTGKKFDKRRQQQNPLFKRKKFCRFTAAGVEQIDYKDTETLKDFIGENGKITPARLTGTKAHYQRQLDTAIKRARFLALLPYTDQHKA</sequence>
<organism>
    <name type="scientific">Burkholderia lata (strain ATCC 17760 / DSM 23089 / LMG 22485 / NCIMB 9086 / R18194 / 383)</name>
    <dbReference type="NCBI Taxonomy" id="482957"/>
    <lineage>
        <taxon>Bacteria</taxon>
        <taxon>Pseudomonadati</taxon>
        <taxon>Pseudomonadota</taxon>
        <taxon>Betaproteobacteria</taxon>
        <taxon>Burkholderiales</taxon>
        <taxon>Burkholderiaceae</taxon>
        <taxon>Burkholderia</taxon>
        <taxon>Burkholderia cepacia complex</taxon>
    </lineage>
</organism>
<comment type="function">
    <text evidence="1">Binds as a heterodimer with protein bS6 to the central domain of the 16S rRNA, where it helps stabilize the platform of the 30S subunit.</text>
</comment>
<comment type="subunit">
    <text evidence="1">Part of the 30S ribosomal subunit. Forms a tight heterodimer with protein bS6.</text>
</comment>
<comment type="similarity">
    <text evidence="1">Belongs to the bacterial ribosomal protein bS18 family.</text>
</comment>
<feature type="chain" id="PRO_1000003466" description="Small ribosomal subunit protein bS18">
    <location>
        <begin position="1"/>
        <end position="91"/>
    </location>
</feature>
<name>RS18_BURL3</name>